<evidence type="ECO:0000255" key="1">
    <source>
        <dbReference type="HAMAP-Rule" id="MF_00415"/>
    </source>
</evidence>
<name>FLGH_HYDCU</name>
<protein>
    <recommendedName>
        <fullName evidence="1">Flagellar L-ring protein</fullName>
    </recommendedName>
    <alternativeName>
        <fullName evidence="1">Basal body L-ring protein</fullName>
    </alternativeName>
</protein>
<feature type="signal peptide" evidence="1">
    <location>
        <begin position="1"/>
        <end position="32"/>
    </location>
</feature>
<feature type="chain" id="PRO_0000236839" description="Flagellar L-ring protein">
    <location>
        <begin position="33"/>
        <end position="250"/>
    </location>
</feature>
<feature type="lipid moiety-binding region" description="N-palmitoyl cysteine" evidence="1">
    <location>
        <position position="33"/>
    </location>
</feature>
<feature type="lipid moiety-binding region" description="S-diacylglycerol cysteine" evidence="1">
    <location>
        <position position="33"/>
    </location>
</feature>
<proteinExistence type="inferred from homology"/>
<accession>Q31FL3</accession>
<keyword id="KW-0975">Bacterial flagellum</keyword>
<keyword id="KW-0998">Cell outer membrane</keyword>
<keyword id="KW-0449">Lipoprotein</keyword>
<keyword id="KW-0472">Membrane</keyword>
<keyword id="KW-0564">Palmitate</keyword>
<keyword id="KW-0732">Signal</keyword>
<organism>
    <name type="scientific">Hydrogenovibrio crunogenus (strain DSM 25203 / XCL-2)</name>
    <name type="common">Thiomicrospira crunogena</name>
    <dbReference type="NCBI Taxonomy" id="317025"/>
    <lineage>
        <taxon>Bacteria</taxon>
        <taxon>Pseudomonadati</taxon>
        <taxon>Pseudomonadota</taxon>
        <taxon>Gammaproteobacteria</taxon>
        <taxon>Thiotrichales</taxon>
        <taxon>Piscirickettsiaceae</taxon>
        <taxon>Hydrogenovibrio</taxon>
    </lineage>
</organism>
<comment type="function">
    <text evidence="1">Assembles around the rod to form the L-ring and probably protects the motor/basal body from shearing forces during rotation.</text>
</comment>
<comment type="subunit">
    <text evidence="1">The basal body constitutes a major portion of the flagellar organelle and consists of four rings (L,P,S, and M) mounted on a central rod.</text>
</comment>
<comment type="subcellular location">
    <subcellularLocation>
        <location evidence="1">Cell outer membrane</location>
        <topology evidence="1">Lipid-anchor</topology>
    </subcellularLocation>
    <subcellularLocation>
        <location evidence="1">Bacterial flagellum basal body</location>
    </subcellularLocation>
</comment>
<comment type="similarity">
    <text evidence="1">Belongs to the FlgH family.</text>
</comment>
<sequence length="250" mass="27061">MTRINTNTQKNNNTKFSKLILGVMVSSIVLSGCSATPERMEKFSYEPNYPMNIPKKTVPKNGSLYQSGDAITLFDDSRAHKVGDIITINLAENFDAKKKDEAKYDKSNQQNFGLNGQAAVGSNASVFGGNVSVPGLGSGIGIGYGSDGSFAGKSDVKQKSSLSGSIAVTVVQVISNGNLVIRGEKWITIHEGEEVIRFAGIVRPQDIRPDNTIDSEKVADVRLIYKDTGISGDTNRPGAMTQWLHKYWPL</sequence>
<dbReference type="EMBL" id="CP000109">
    <property type="protein sequence ID" value="ABB42060.1"/>
    <property type="molecule type" value="Genomic_DNA"/>
</dbReference>
<dbReference type="SMR" id="Q31FL3"/>
<dbReference type="STRING" id="317025.Tcr_1468"/>
<dbReference type="KEGG" id="tcx:Tcr_1468"/>
<dbReference type="eggNOG" id="COG2063">
    <property type="taxonomic scope" value="Bacteria"/>
</dbReference>
<dbReference type="HOGENOM" id="CLU_069313_0_2_6"/>
<dbReference type="OrthoDB" id="9789463at2"/>
<dbReference type="GO" id="GO:0009427">
    <property type="term" value="C:bacterial-type flagellum basal body, distal rod, L ring"/>
    <property type="evidence" value="ECO:0007669"/>
    <property type="project" value="InterPro"/>
</dbReference>
<dbReference type="GO" id="GO:0009279">
    <property type="term" value="C:cell outer membrane"/>
    <property type="evidence" value="ECO:0007669"/>
    <property type="project" value="UniProtKB-SubCell"/>
</dbReference>
<dbReference type="GO" id="GO:0003774">
    <property type="term" value="F:cytoskeletal motor activity"/>
    <property type="evidence" value="ECO:0007669"/>
    <property type="project" value="InterPro"/>
</dbReference>
<dbReference type="GO" id="GO:0071973">
    <property type="term" value="P:bacterial-type flagellum-dependent cell motility"/>
    <property type="evidence" value="ECO:0007669"/>
    <property type="project" value="InterPro"/>
</dbReference>
<dbReference type="HAMAP" id="MF_00415">
    <property type="entry name" value="FlgH"/>
    <property type="match status" value="1"/>
</dbReference>
<dbReference type="InterPro" id="IPR000527">
    <property type="entry name" value="Flag_Lring"/>
</dbReference>
<dbReference type="PANTHER" id="PTHR34933">
    <property type="entry name" value="FLAGELLAR L-RING PROTEIN"/>
    <property type="match status" value="1"/>
</dbReference>
<dbReference type="PANTHER" id="PTHR34933:SF1">
    <property type="entry name" value="FLAGELLAR L-RING PROTEIN"/>
    <property type="match status" value="1"/>
</dbReference>
<dbReference type="Pfam" id="PF02107">
    <property type="entry name" value="FlgH"/>
    <property type="match status" value="1"/>
</dbReference>
<dbReference type="PRINTS" id="PR01008">
    <property type="entry name" value="FLGLRINGFLGH"/>
</dbReference>
<dbReference type="PROSITE" id="PS51257">
    <property type="entry name" value="PROKAR_LIPOPROTEIN"/>
    <property type="match status" value="1"/>
</dbReference>
<gene>
    <name evidence="1" type="primary">flgH</name>
    <name type="ordered locus">Tcr_1468</name>
</gene>
<reference key="1">
    <citation type="journal article" date="2006" name="PLoS Biol.">
        <title>The genome of deep-sea vent chemolithoautotroph Thiomicrospira crunogena XCL-2.</title>
        <authorList>
            <person name="Scott K.M."/>
            <person name="Sievert S.M."/>
            <person name="Abril F.N."/>
            <person name="Ball L.A."/>
            <person name="Barrett C.J."/>
            <person name="Blake R.A."/>
            <person name="Boller A.J."/>
            <person name="Chain P.S.G."/>
            <person name="Clark J.A."/>
            <person name="Davis C.R."/>
            <person name="Detter C."/>
            <person name="Do K.F."/>
            <person name="Dobrinski K.P."/>
            <person name="Faza B.I."/>
            <person name="Fitzpatrick K.A."/>
            <person name="Freyermuth S.K."/>
            <person name="Harmer T.L."/>
            <person name="Hauser L.J."/>
            <person name="Huegler M."/>
            <person name="Kerfeld C.A."/>
            <person name="Klotz M.G."/>
            <person name="Kong W.W."/>
            <person name="Land M."/>
            <person name="Lapidus A."/>
            <person name="Larimer F.W."/>
            <person name="Longo D.L."/>
            <person name="Lucas S."/>
            <person name="Malfatti S.A."/>
            <person name="Massey S.E."/>
            <person name="Martin D.D."/>
            <person name="McCuddin Z."/>
            <person name="Meyer F."/>
            <person name="Moore J.L."/>
            <person name="Ocampo L.H. Jr."/>
            <person name="Paul J.H."/>
            <person name="Paulsen I.T."/>
            <person name="Reep D.K."/>
            <person name="Ren Q."/>
            <person name="Ross R.L."/>
            <person name="Sato P.Y."/>
            <person name="Thomas P."/>
            <person name="Tinkham L.E."/>
            <person name="Zeruth G.T."/>
        </authorList>
    </citation>
    <scope>NUCLEOTIDE SEQUENCE [LARGE SCALE GENOMIC DNA]</scope>
    <source>
        <strain>DSM 25203 / XCL-2</strain>
    </source>
</reference>